<comment type="function">
    <text evidence="7 11">Highly reducing polyketide synthase; part of the gene cluster that mediates the biosynthesis of the tetraketides fugralins such as linear fugralin A and cyclic fugralin B, volatile compounds that play a role in the asexual reproductive cycle but are not involved in pathogenicity (PubMed:38025899). One of the key features of fugralins is the presence of a double methyl group, which is only rarely encountered in fungal secondary metabolites. As the fugralins cluster does not contain an independent methyltransferase, the PKS FGR1 is probably responsible for adding two methyl groups to the same carbon atom (Probable). Fugralin B is similar to fugralin A except for a cyclization between the carboxylic acid C-8 and the alcohol on C-4 resulting in a six membered lactone ring, probably catalyzed by the cyclase FGR4 (Probable). The exact role of the individual cluster genes remains unknown and further work is needed to unravel the biosynthetic pathway (Probable).</text>
</comment>
<comment type="cofactor">
    <cofactor evidence="2">
        <name>pantetheine 4'-phosphate</name>
        <dbReference type="ChEBI" id="CHEBI:47942"/>
    </cofactor>
</comment>
<comment type="pathway">
    <text evidence="7">Secondary metabolite biosynthesis.</text>
</comment>
<comment type="induction">
    <text evidence="5 6">Expression is induced during mycelial growth.</text>
</comment>
<comment type="domain">
    <text evidence="10">Multidomain protein; including a ketosynthase (KS) that catalyzes repeated decarboxylative condensation to elongate the polyketide backbone; a malonyl-CoA:ACP transacylase (MAT) that selects and transfers the extender unit malonyl-CoA; a dehydratase (DH) domain that reduces hydroxyl groups to enoyl groups; a methyltransferase (CMeT) domain responsible for the incorporation of methyl groups; an enoylreductase (ER) domain that reduces enoyl groups to alkyl group; a ketoreductase (KR) domain that catalyzes beta-ketoreduction steps; and an acyl-carrier protein (ACP) that serves as the tether of the growing and completed polyketide via its phosphopantetheinyl arm.</text>
</comment>
<comment type="disruption phenotype">
    <text evidence="5 7">Results in mycelial growth inhibition but does not significantly affect pathogenicity on wheat (PubMed:16278459). Leads to slightly smoother and more transparent macroconidia (PubMed:38025899).</text>
</comment>
<keyword id="KW-0012">Acyltransferase</keyword>
<keyword id="KW-0511">Multifunctional enzyme</keyword>
<keyword id="KW-0521">NADP</keyword>
<keyword id="KW-0560">Oxidoreductase</keyword>
<keyword id="KW-0596">Phosphopantetheine</keyword>
<keyword id="KW-0597">Phosphoprotein</keyword>
<keyword id="KW-1185">Reference proteome</keyword>
<keyword id="KW-0808">Transferase</keyword>
<sequence length="2563" mass="280257">MYNHQGKNNKMSDIAIVGYSFKLPQGVEDDDAFWDVLENRRNLMTDWPESRVKTDSFANNKHQKWNGKGGHFINDDVAAFDAPFFSLTAKEASAMDPMQRWTLEATYHAFENAGLPVDSLKGSRTAVFSASMLEDYSRMTAVDPDNLERTAVTGSTVSCIIPNRVSWYFDLRGPSIHVNTACSSSLSAVDMACKALNSGDALCAVVTGTNLLLDPSIFQVLANQGFLSPDGVCYSFDERANGYARGEGVIAVVLKPVQAAIENGDMIRAVIRSIGSNQDGHTPILTQPSSQSQEELIRHVYKQAGLSMSDTRYVEAHGTGTPVGDPIEVKAIGRCFQEHRSHSEPLYVGSVKANIGHLEGASALASLVKCICNMTRRSTQGGPKLTLTVILEKGVILPNALLQKMNPAMNADTYSIEVPIQNVQWPVQGLRRVSLNSFGFGGSNSHIVLDDALHYLQDRSLSGIHNTSLIPKPITNGSGVTNGHGAAHTNGANVTKGVANGHSDVELRKLLVWTAADEKAAKRTMEAYDNFHKEKMLGDPKKLDALASTLGSRRSNMLWRASAVVDGSKRQTLSPSKPIRSSEDLGLAFAFTGQGAQYINMGSGLEHYAVYQETLEKISEIYSSFGCSWNLFGNCGENINMPQYSQPLATAVQIALVDLLANFGITPKVVIGHSSGEIAAAYASGGLSLVSACRVSYFRGLLAGKLRKTNASSPGAMLSINLAPHDVLGYLEKTGVLTVSVACINSPLNITLSGPEEAIDKIKSQADQDGIFAQKLKTGVAYHSQSMKVIAGEYLAALEGLTKRKDGTSIPMVSSVTGKSISPETLSTGQYWVDNMLSPVRFAKVVQVIANNNSARKLGLGNITDLIEIGPHPALRRPVKDTLSEMSSASKGVRYSYVLHRSHPAIQTILELAGQLFCEGYPVSILAANQQRTKAKFLVDCPKYPFDRSQRYWAESRLSRDFRLREAVKGELLGVRVSDWNPLEPRWRNFWSIDSSAWTGDHKISDTVLFPASGMLLMAIEAAQEMVPSDRAVFGYNIEKAEFMNPIIVPETWEDRLETQVHLRVVEKQLAAKFDVSIFTYSHNEWVECFTANISVEFQDNDSNGERRVSHEHIQRQHQDVAHTCTLPIDPRVFYRDAAAVGLQYGDWFQLMRNIKWDGKTSAMARVDLSQARFNIRSLVHPAVLDQAFQVLRASSGQQPAANVPVRLKNAWFSSKPWKTPAVLWMSEATPTLHGYGEQGKVTALGEDGEILCCIESVVTSAVSGGITHKEKKLVYSVEWKPQFSMLGSDQLTRLFAANAVPKDDSAVLENHSRLCHTLELVAARVLKNVDKSKVPADLQRHVGWMEHHVSKLPAEHQAEATKISDEELESRLAEVDSVLPAWKLYTTCARKLPDILFGELDPLQVVFESDQADIFYSDLFRNLCADGQLNYLLDLASHENPALRVLEVGAGTGGMTGHVISALQERERRTGGLAFSEYTYTDISPAFFETASKRWPDLKSQGRITFKTLDLDRSIDVQGVDPGSYDLVIAASVLHATPYLEATIRNVRKALKPGGRLILLEVINPDDIATNFMAGLVPGWWVAREEWRPHSAAIPEHLWDKCLKDNGFSGNDLVIRDYQDDQCHIMSVIITTASEPQHKVEEKASRGRLVMLISEDASMKERELADQVRARIDPNLERRATVVTFSLAPVQRELAKLTTDDAVICFVEAGDKPLLSTLSEGQFSCLQFLISKVSNLLWVTSASISDSMCPDNSVAQGFFRSIRAEQPDTHIVTLAIDGEMAQTSQAGFISEVYKTAFETETPSKEVEYVVQDGVITTGRAVRDISTDTALRSLVSKQLQQKSWGEGPALKLGISQPGSLDSLQFVEDQSHAEELGPSDVEIEAMAWGLTSRDLNIALGHPDKRTEEFGSDCVGVVTRIGESCSTTIRIGDRVAIVSAGCMRKYARANEACVFKIPDSLGFENAASLIIPGLSACHSILNVARVQENDNVLIHSAASLLGQIAVRFAQTMSAPVFATVSTAAEKQLLIHILSLNAEHIFDSNSPSLTQDVMRVTEEEGVDVLLDCSRDTLHTPLSCVTDGGCIVSLGGRNSSVASTMAAEIMSRSLTFSSIDIMRLKPKAFSQLAQTTMQLLAEDKIQPPQLLPAFKISDIRNGFKKLQEDTSERVIVIAEQGDTVPQFVQDRRPWTFDGNSTYLVAGGSGGLGRAIIRWMADSGAKHLIIPSRSGAISEAASQLVAELTSHGVNIVAPKCDVSVREDVAVMLEECSHTMPPIKGCINAAMVLQDAIFQSNMTFQQWDLTIRSKVDTSKNLHELLPKDLDFSILLSSLAGVVGQMASANYAGGCAYQDALAKHRRMHGQSALSLDIGWMSNIGIIAEKEAYQRQRQTSNDMQPINDKELLALLTLCCDPNNQLKLPPLSEGQVLFGLRTPADILEEGQQPPALLERPLLSAFSFLAGSNSTPDQAVDHAENARDVFQKSSDARERQQVVIRAIAAKLARAMSISPDDVEPSKPLSSYGVDSLMAVELRNWINKEFSSTVAVFDIIGSVSIAGVAEVVEARSSI</sequence>
<proteinExistence type="evidence at transcript level"/>
<dbReference type="EC" id="2.3.1.-" evidence="7"/>
<dbReference type="EMBL" id="HG970334">
    <property type="protein sequence ID" value="CEF87207.1"/>
    <property type="molecule type" value="Genomic_DNA"/>
</dbReference>
<dbReference type="RefSeq" id="XP_011323126.1">
    <property type="nucleotide sequence ID" value="XM_011324824.1"/>
</dbReference>
<dbReference type="SMR" id="I1RLA7"/>
<dbReference type="STRING" id="229533.I1RLA7"/>
<dbReference type="KEGG" id="fgr:FGSG_04694"/>
<dbReference type="VEuPathDB" id="FungiDB:FGRAMPH1_01G16085"/>
<dbReference type="eggNOG" id="KOG1202">
    <property type="taxonomic scope" value="Eukaryota"/>
</dbReference>
<dbReference type="HOGENOM" id="CLU_000022_31_0_1"/>
<dbReference type="InParanoid" id="I1RLA7"/>
<dbReference type="OrthoDB" id="139586at110618"/>
<dbReference type="Proteomes" id="UP000070720">
    <property type="component" value="Chromosome 3"/>
</dbReference>
<dbReference type="GO" id="GO:0004315">
    <property type="term" value="F:3-oxoacyl-[acyl-carrier-protein] synthase activity"/>
    <property type="evidence" value="ECO:0007669"/>
    <property type="project" value="InterPro"/>
</dbReference>
<dbReference type="GO" id="GO:0004312">
    <property type="term" value="F:fatty acid synthase activity"/>
    <property type="evidence" value="ECO:0007669"/>
    <property type="project" value="TreeGrafter"/>
</dbReference>
<dbReference type="GO" id="GO:0016491">
    <property type="term" value="F:oxidoreductase activity"/>
    <property type="evidence" value="ECO:0007669"/>
    <property type="project" value="UniProtKB-KW"/>
</dbReference>
<dbReference type="GO" id="GO:0031177">
    <property type="term" value="F:phosphopantetheine binding"/>
    <property type="evidence" value="ECO:0007669"/>
    <property type="project" value="InterPro"/>
</dbReference>
<dbReference type="GO" id="GO:0006633">
    <property type="term" value="P:fatty acid biosynthetic process"/>
    <property type="evidence" value="ECO:0007669"/>
    <property type="project" value="InterPro"/>
</dbReference>
<dbReference type="GO" id="GO:0030639">
    <property type="term" value="P:polyketide biosynthetic process"/>
    <property type="evidence" value="ECO:0007669"/>
    <property type="project" value="UniProtKB-ARBA"/>
</dbReference>
<dbReference type="CDD" id="cd02440">
    <property type="entry name" value="AdoMet_MTases"/>
    <property type="match status" value="1"/>
</dbReference>
<dbReference type="CDD" id="cd05195">
    <property type="entry name" value="enoyl_red"/>
    <property type="match status" value="1"/>
</dbReference>
<dbReference type="CDD" id="cd00833">
    <property type="entry name" value="PKS"/>
    <property type="match status" value="1"/>
</dbReference>
<dbReference type="Gene3D" id="3.40.47.10">
    <property type="match status" value="1"/>
</dbReference>
<dbReference type="Gene3D" id="1.10.1200.10">
    <property type="entry name" value="ACP-like"/>
    <property type="match status" value="1"/>
</dbReference>
<dbReference type="Gene3D" id="3.40.366.10">
    <property type="entry name" value="Malonyl-Coenzyme A Acyl Carrier Protein, domain 2"/>
    <property type="match status" value="1"/>
</dbReference>
<dbReference type="Gene3D" id="3.90.180.10">
    <property type="entry name" value="Medium-chain alcohol dehydrogenases, catalytic domain"/>
    <property type="match status" value="1"/>
</dbReference>
<dbReference type="Gene3D" id="3.40.50.720">
    <property type="entry name" value="NAD(P)-binding Rossmann-like Domain"/>
    <property type="match status" value="1"/>
</dbReference>
<dbReference type="Gene3D" id="3.10.129.110">
    <property type="entry name" value="Polyketide synthase dehydratase"/>
    <property type="match status" value="1"/>
</dbReference>
<dbReference type="Gene3D" id="3.40.50.150">
    <property type="entry name" value="Vaccinia Virus protein VP39"/>
    <property type="match status" value="1"/>
</dbReference>
<dbReference type="InterPro" id="IPR001227">
    <property type="entry name" value="Ac_transferase_dom_sf"/>
</dbReference>
<dbReference type="InterPro" id="IPR036736">
    <property type="entry name" value="ACP-like_sf"/>
</dbReference>
<dbReference type="InterPro" id="IPR014043">
    <property type="entry name" value="Acyl_transferase_dom"/>
</dbReference>
<dbReference type="InterPro" id="IPR016035">
    <property type="entry name" value="Acyl_Trfase/lysoPLipase"/>
</dbReference>
<dbReference type="InterPro" id="IPR013149">
    <property type="entry name" value="ADH-like_C"/>
</dbReference>
<dbReference type="InterPro" id="IPR013154">
    <property type="entry name" value="ADH-like_N"/>
</dbReference>
<dbReference type="InterPro" id="IPR011032">
    <property type="entry name" value="GroES-like_sf"/>
</dbReference>
<dbReference type="InterPro" id="IPR018201">
    <property type="entry name" value="Ketoacyl_synth_AS"/>
</dbReference>
<dbReference type="InterPro" id="IPR014031">
    <property type="entry name" value="Ketoacyl_synth_C"/>
</dbReference>
<dbReference type="InterPro" id="IPR014030">
    <property type="entry name" value="Ketoacyl_synth_N"/>
</dbReference>
<dbReference type="InterPro" id="IPR016036">
    <property type="entry name" value="Malonyl_transacylase_ACP-bd"/>
</dbReference>
<dbReference type="InterPro" id="IPR013217">
    <property type="entry name" value="Methyltransf_12"/>
</dbReference>
<dbReference type="InterPro" id="IPR036291">
    <property type="entry name" value="NAD(P)-bd_dom_sf"/>
</dbReference>
<dbReference type="InterPro" id="IPR056501">
    <property type="entry name" value="NAD-bd_HRPKS_sdrA"/>
</dbReference>
<dbReference type="InterPro" id="IPR020841">
    <property type="entry name" value="PKS_Beta-ketoAc_synthase_dom"/>
</dbReference>
<dbReference type="InterPro" id="IPR042104">
    <property type="entry name" value="PKS_dehydratase_sf"/>
</dbReference>
<dbReference type="InterPro" id="IPR020807">
    <property type="entry name" value="PKS_DH"/>
</dbReference>
<dbReference type="InterPro" id="IPR049551">
    <property type="entry name" value="PKS_DH_C"/>
</dbReference>
<dbReference type="InterPro" id="IPR049552">
    <property type="entry name" value="PKS_DH_N"/>
</dbReference>
<dbReference type="InterPro" id="IPR020843">
    <property type="entry name" value="PKS_ER"/>
</dbReference>
<dbReference type="InterPro" id="IPR013968">
    <property type="entry name" value="PKS_KR"/>
</dbReference>
<dbReference type="InterPro" id="IPR049900">
    <property type="entry name" value="PKS_mFAS_DH"/>
</dbReference>
<dbReference type="InterPro" id="IPR050091">
    <property type="entry name" value="PKS_NRPS_Biosynth_Enz"/>
</dbReference>
<dbReference type="InterPro" id="IPR020806">
    <property type="entry name" value="PKS_PP-bd"/>
</dbReference>
<dbReference type="InterPro" id="IPR009081">
    <property type="entry name" value="PP-bd_ACP"/>
</dbReference>
<dbReference type="InterPro" id="IPR006162">
    <property type="entry name" value="Ppantetheine_attach_site"/>
</dbReference>
<dbReference type="InterPro" id="IPR029063">
    <property type="entry name" value="SAM-dependent_MTases_sf"/>
</dbReference>
<dbReference type="InterPro" id="IPR016039">
    <property type="entry name" value="Thiolase-like"/>
</dbReference>
<dbReference type="PANTHER" id="PTHR43775:SF29">
    <property type="entry name" value="ASPERFURANONE POLYKETIDE SYNTHASE AFOG-RELATED"/>
    <property type="match status" value="1"/>
</dbReference>
<dbReference type="PANTHER" id="PTHR43775">
    <property type="entry name" value="FATTY ACID SYNTHASE"/>
    <property type="match status" value="1"/>
</dbReference>
<dbReference type="Pfam" id="PF23297">
    <property type="entry name" value="ACP_SdgA_C"/>
    <property type="match status" value="1"/>
</dbReference>
<dbReference type="Pfam" id="PF00698">
    <property type="entry name" value="Acyl_transf_1"/>
    <property type="match status" value="1"/>
</dbReference>
<dbReference type="Pfam" id="PF08240">
    <property type="entry name" value="ADH_N"/>
    <property type="match status" value="1"/>
</dbReference>
<dbReference type="Pfam" id="PF00107">
    <property type="entry name" value="ADH_zinc_N"/>
    <property type="match status" value="1"/>
</dbReference>
<dbReference type="Pfam" id="PF00109">
    <property type="entry name" value="ketoacyl-synt"/>
    <property type="match status" value="1"/>
</dbReference>
<dbReference type="Pfam" id="PF02801">
    <property type="entry name" value="Ketoacyl-synt_C"/>
    <property type="match status" value="1"/>
</dbReference>
<dbReference type="Pfam" id="PF08659">
    <property type="entry name" value="KR"/>
    <property type="match status" value="1"/>
</dbReference>
<dbReference type="Pfam" id="PF08242">
    <property type="entry name" value="Methyltransf_12"/>
    <property type="match status" value="1"/>
</dbReference>
<dbReference type="Pfam" id="PF23114">
    <property type="entry name" value="NAD-bd_HRPKS_sdrA"/>
    <property type="match status" value="1"/>
</dbReference>
<dbReference type="Pfam" id="PF21089">
    <property type="entry name" value="PKS_DH_N"/>
    <property type="match status" value="1"/>
</dbReference>
<dbReference type="Pfam" id="PF14765">
    <property type="entry name" value="PS-DH"/>
    <property type="match status" value="1"/>
</dbReference>
<dbReference type="SMART" id="SM00827">
    <property type="entry name" value="PKS_AT"/>
    <property type="match status" value="1"/>
</dbReference>
<dbReference type="SMART" id="SM00826">
    <property type="entry name" value="PKS_DH"/>
    <property type="match status" value="1"/>
</dbReference>
<dbReference type="SMART" id="SM00829">
    <property type="entry name" value="PKS_ER"/>
    <property type="match status" value="1"/>
</dbReference>
<dbReference type="SMART" id="SM00822">
    <property type="entry name" value="PKS_KR"/>
    <property type="match status" value="1"/>
</dbReference>
<dbReference type="SMART" id="SM00825">
    <property type="entry name" value="PKS_KS"/>
    <property type="match status" value="1"/>
</dbReference>
<dbReference type="SMART" id="SM00823">
    <property type="entry name" value="PKS_PP"/>
    <property type="match status" value="1"/>
</dbReference>
<dbReference type="SUPFAM" id="SSF47336">
    <property type="entry name" value="ACP-like"/>
    <property type="match status" value="1"/>
</dbReference>
<dbReference type="SUPFAM" id="SSF52151">
    <property type="entry name" value="FabD/lysophospholipase-like"/>
    <property type="match status" value="1"/>
</dbReference>
<dbReference type="SUPFAM" id="SSF50129">
    <property type="entry name" value="GroES-like"/>
    <property type="match status" value="1"/>
</dbReference>
<dbReference type="SUPFAM" id="SSF51735">
    <property type="entry name" value="NAD(P)-binding Rossmann-fold domains"/>
    <property type="match status" value="2"/>
</dbReference>
<dbReference type="SUPFAM" id="SSF55048">
    <property type="entry name" value="Probable ACP-binding domain of malonyl-CoA ACP transacylase"/>
    <property type="match status" value="1"/>
</dbReference>
<dbReference type="SUPFAM" id="SSF53335">
    <property type="entry name" value="S-adenosyl-L-methionine-dependent methyltransferases"/>
    <property type="match status" value="1"/>
</dbReference>
<dbReference type="SUPFAM" id="SSF53901">
    <property type="entry name" value="Thiolase-like"/>
    <property type="match status" value="1"/>
</dbReference>
<dbReference type="PROSITE" id="PS50075">
    <property type="entry name" value="CARRIER"/>
    <property type="match status" value="1"/>
</dbReference>
<dbReference type="PROSITE" id="PS00606">
    <property type="entry name" value="KS3_1"/>
    <property type="match status" value="1"/>
</dbReference>
<dbReference type="PROSITE" id="PS52004">
    <property type="entry name" value="KS3_2"/>
    <property type="match status" value="1"/>
</dbReference>
<dbReference type="PROSITE" id="PS00012">
    <property type="entry name" value="PHOSPHOPANTETHEINE"/>
    <property type="match status" value="1"/>
</dbReference>
<dbReference type="PROSITE" id="PS52019">
    <property type="entry name" value="PKS_MFAS_DH"/>
    <property type="match status" value="1"/>
</dbReference>
<feature type="chain" id="PRO_0000460587" description="Highly reducing polyketide synthase 2">
    <location>
        <begin position="1"/>
        <end position="2563"/>
    </location>
</feature>
<feature type="domain" description="Ketosynthase family 3 (KS3)" evidence="3 10">
    <location>
        <begin position="11"/>
        <end position="451"/>
    </location>
</feature>
<feature type="domain" description="Malonyl-CoA:ACP transacylase (MAT)" evidence="1 10">
    <location>
        <begin position="589"/>
        <end position="890"/>
    </location>
</feature>
<feature type="domain" description="PKS/mFAS DH" evidence="4 10">
    <location>
        <begin position="970"/>
        <end position="1269"/>
    </location>
</feature>
<feature type="domain" description="Enoyl reductase (ER)" evidence="1 10">
    <location>
        <begin position="1858"/>
        <end position="2168"/>
    </location>
</feature>
<feature type="domain" description="Ketoreductase (KR)" evidence="1 10">
    <location>
        <begin position="2192"/>
        <end position="2370"/>
    </location>
</feature>
<feature type="domain" description="Carrier" evidence="2 10">
    <location>
        <begin position="2480"/>
        <end position="2561"/>
    </location>
</feature>
<feature type="region of interest" description="N-terminal hotdog fold" evidence="4">
    <location>
        <begin position="970"/>
        <end position="1101"/>
    </location>
</feature>
<feature type="region of interest" description="C-terminal hotdog fold" evidence="4">
    <location>
        <begin position="1126"/>
        <end position="1269"/>
    </location>
</feature>
<feature type="region of interest" description="Methyltransferase (CMet) domain" evidence="1 10">
    <location>
        <begin position="1296"/>
        <end position="1618"/>
    </location>
</feature>
<feature type="active site" description="For beta-ketoacyl synthase activity" evidence="3">
    <location>
        <position position="182"/>
    </location>
</feature>
<feature type="active site" description="For beta-ketoacyl synthase activity" evidence="3">
    <location>
        <position position="317"/>
    </location>
</feature>
<feature type="active site" description="For beta-ketoacyl synthase activity" evidence="3">
    <location>
        <position position="357"/>
    </location>
</feature>
<feature type="active site" description="Proton acceptor; for dehydratase activity" evidence="4">
    <location>
        <position position="1002"/>
    </location>
</feature>
<feature type="active site" description="Proton donor; for dehydratase activity" evidence="4">
    <location>
        <position position="1186"/>
    </location>
</feature>
<feature type="modified residue" description="O-(pantetheine 4'-phosphoryl)serine" evidence="2">
    <location>
        <position position="2521"/>
    </location>
</feature>
<protein>
    <recommendedName>
        <fullName evidence="8">Highly reducing polyketide synthase 2</fullName>
        <shortName evidence="8">HR-PKS 2</shortName>
        <ecNumber evidence="7">2.3.1.-</ecNumber>
    </recommendedName>
    <alternativeName>
        <fullName evidence="9">Fugralins biosynthesis cluster protein 1</fullName>
    </alternativeName>
</protein>
<organism>
    <name type="scientific">Gibberella zeae (strain ATCC MYA-4620 / CBS 123657 / FGSC 9075 / NRRL 31084 / PH-1)</name>
    <name type="common">Wheat head blight fungus</name>
    <name type="synonym">Fusarium graminearum</name>
    <dbReference type="NCBI Taxonomy" id="229533"/>
    <lineage>
        <taxon>Eukaryota</taxon>
        <taxon>Fungi</taxon>
        <taxon>Dikarya</taxon>
        <taxon>Ascomycota</taxon>
        <taxon>Pezizomycotina</taxon>
        <taxon>Sordariomycetes</taxon>
        <taxon>Hypocreomycetidae</taxon>
        <taxon>Hypocreales</taxon>
        <taxon>Nectriaceae</taxon>
        <taxon>Fusarium</taxon>
    </lineage>
</organism>
<name>FGR1_GIBZE</name>
<gene>
    <name evidence="9" type="primary">FGR1</name>
    <name evidence="8" type="synonym">PKS2</name>
    <name type="ORF">FG04694</name>
    <name type="ORF">FGRAMPH1_01T16085</name>
</gene>
<accession>I1RLA7</accession>
<accession>A0A098E0S8</accession>
<reference key="1">
    <citation type="journal article" date="2007" name="Science">
        <title>The Fusarium graminearum genome reveals a link between localized polymorphism and pathogen specialization.</title>
        <authorList>
            <person name="Cuomo C.A."/>
            <person name="Gueldener U."/>
            <person name="Xu J.-R."/>
            <person name="Trail F."/>
            <person name="Turgeon B.G."/>
            <person name="Di Pietro A."/>
            <person name="Walton J.D."/>
            <person name="Ma L.-J."/>
            <person name="Baker S.E."/>
            <person name="Rep M."/>
            <person name="Adam G."/>
            <person name="Antoniw J."/>
            <person name="Baldwin T."/>
            <person name="Calvo S.E."/>
            <person name="Chang Y.-L."/>
            <person name="DeCaprio D."/>
            <person name="Gale L.R."/>
            <person name="Gnerre S."/>
            <person name="Goswami R.S."/>
            <person name="Hammond-Kosack K."/>
            <person name="Harris L.J."/>
            <person name="Hilburn K."/>
            <person name="Kennell J.C."/>
            <person name="Kroken S."/>
            <person name="Magnuson J.K."/>
            <person name="Mannhaupt G."/>
            <person name="Mauceli E.W."/>
            <person name="Mewes H.-W."/>
            <person name="Mitterbauer R."/>
            <person name="Muehlbauer G."/>
            <person name="Muensterkoetter M."/>
            <person name="Nelson D."/>
            <person name="O'Donnell K."/>
            <person name="Ouellet T."/>
            <person name="Qi W."/>
            <person name="Quesneville H."/>
            <person name="Roncero M.I.G."/>
            <person name="Seong K.-Y."/>
            <person name="Tetko I.V."/>
            <person name="Urban M."/>
            <person name="Waalwijk C."/>
            <person name="Ward T.J."/>
            <person name="Yao J."/>
            <person name="Birren B.W."/>
            <person name="Kistler H.C."/>
        </authorList>
    </citation>
    <scope>NUCLEOTIDE SEQUENCE [LARGE SCALE GENOMIC DNA]</scope>
    <source>
        <strain>ATCC MYA-4620 / CBS 123657 / FGSC 9075 / NRRL 31084 / PH-1</strain>
    </source>
</reference>
<reference key="2">
    <citation type="journal article" date="2010" name="Nature">
        <title>Comparative genomics reveals mobile pathogenicity chromosomes in Fusarium.</title>
        <authorList>
            <person name="Ma L.-J."/>
            <person name="van der Does H.C."/>
            <person name="Borkovich K.A."/>
            <person name="Coleman J.J."/>
            <person name="Daboussi M.-J."/>
            <person name="Di Pietro A."/>
            <person name="Dufresne M."/>
            <person name="Freitag M."/>
            <person name="Grabherr M."/>
            <person name="Henrissat B."/>
            <person name="Houterman P.M."/>
            <person name="Kang S."/>
            <person name="Shim W.-B."/>
            <person name="Woloshuk C."/>
            <person name="Xie X."/>
            <person name="Xu J.-R."/>
            <person name="Antoniw J."/>
            <person name="Baker S.E."/>
            <person name="Bluhm B.H."/>
            <person name="Breakspear A."/>
            <person name="Brown D.W."/>
            <person name="Butchko R.A.E."/>
            <person name="Chapman S."/>
            <person name="Coulson R."/>
            <person name="Coutinho P.M."/>
            <person name="Danchin E.G.J."/>
            <person name="Diener A."/>
            <person name="Gale L.R."/>
            <person name="Gardiner D.M."/>
            <person name="Goff S."/>
            <person name="Hammond-Kosack K.E."/>
            <person name="Hilburn K."/>
            <person name="Hua-Van A."/>
            <person name="Jonkers W."/>
            <person name="Kazan K."/>
            <person name="Kodira C.D."/>
            <person name="Koehrsen M."/>
            <person name="Kumar L."/>
            <person name="Lee Y.-H."/>
            <person name="Li L."/>
            <person name="Manners J.M."/>
            <person name="Miranda-Saavedra D."/>
            <person name="Mukherjee M."/>
            <person name="Park G."/>
            <person name="Park J."/>
            <person name="Park S.-Y."/>
            <person name="Proctor R.H."/>
            <person name="Regev A."/>
            <person name="Ruiz-Roldan M.C."/>
            <person name="Sain D."/>
            <person name="Sakthikumar S."/>
            <person name="Sykes S."/>
            <person name="Schwartz D.C."/>
            <person name="Turgeon B.G."/>
            <person name="Wapinski I."/>
            <person name="Yoder O."/>
            <person name="Young S."/>
            <person name="Zeng Q."/>
            <person name="Zhou S."/>
            <person name="Galagan J."/>
            <person name="Cuomo C.A."/>
            <person name="Kistler H.C."/>
            <person name="Rep M."/>
        </authorList>
    </citation>
    <scope>GENOME REANNOTATION</scope>
    <source>
        <strain>ATCC MYA-4620 / CBS 123657 / FGSC 9075 / NRRL 31084 / PH-1</strain>
    </source>
</reference>
<reference key="3">
    <citation type="journal article" date="2015" name="BMC Genomics">
        <title>The completed genome sequence of the pathogenic ascomycete fungus Fusarium graminearum.</title>
        <authorList>
            <person name="King R."/>
            <person name="Urban M."/>
            <person name="Hammond-Kosack M.C.U."/>
            <person name="Hassani-Pak K."/>
            <person name="Hammond-Kosack K.E."/>
        </authorList>
    </citation>
    <scope>NUCLEOTIDE SEQUENCE [LARGE SCALE GENOMIC DNA]</scope>
    <source>
        <strain>ATCC MYA-4620 / CBS 123657 / FGSC 9075 / NRRL 31084 / PH-1</strain>
    </source>
</reference>
<reference key="4">
    <citation type="journal article" date="2005" name="Eukaryot. Cell">
        <title>Functional analysis of the polyketide synthase genes in the filamentous fungus Gibberella zeae (anamorph Fusarium graminearum).</title>
        <authorList>
            <person name="Gaffoor I."/>
            <person name="Brown D.W."/>
            <person name="Plattner R."/>
            <person name="Proctor R.H."/>
            <person name="Qi W."/>
            <person name="Trail F."/>
        </authorList>
    </citation>
    <scope>IDENTIFICATION</scope>
    <scope>DISRUPTION PHENOTYPE</scope>
    <scope>INDUCTION</scope>
</reference>
<reference key="5">
    <citation type="journal article" date="2011" name="Mol. Plant Microbe Interact.">
        <title>The transcriptome of Fusarium graminearum during the infection of wheat.</title>
        <authorList>
            <person name="Lysoee E."/>
            <person name="Seong K.Y."/>
            <person name="Kistler H.C."/>
        </authorList>
    </citation>
    <scope>INDUCTION</scope>
</reference>
<reference key="6">
    <citation type="journal article" date="2015" name="Fungal Genet. Biol.">
        <title>An update to polyketide synthase and non-ribosomal synthetase genes and nomenclature in Fusarium.</title>
        <authorList>
            <person name="Hansen F.T."/>
            <person name="Gardiner D.M."/>
            <person name="Lysoee E."/>
            <person name="Fuertes P.R."/>
            <person name="Tudzynski B."/>
            <person name="Wiemann P."/>
            <person name="Sondergaard T.E."/>
            <person name="Giese H."/>
            <person name="Brodersen D.E."/>
            <person name="Soerensen J.L."/>
        </authorList>
    </citation>
    <scope>DOMAIN</scope>
</reference>
<reference key="7">
    <citation type="journal article" date="2023" name="Front. Fungal Biol.">
        <title>Filling out the gaps - identification of fugralins as products of the PKS2 cluster in Fusarium graminearum.</title>
        <authorList>
            <person name="Severinsen M.M."/>
            <person name="Westphal K.R."/>
            <person name="Terp M."/>
            <person name="Soerensen T."/>
            <person name="Olsen A."/>
            <person name="Bachleitner S."/>
            <person name="Studt-Reinhold L."/>
            <person name="Wimmer R."/>
            <person name="Sondergaard T.E."/>
            <person name="Soerensen J.L."/>
        </authorList>
    </citation>
    <scope>FUNCTION</scope>
    <scope>DISRUPTION PHENOTYPE</scope>
    <scope>PATHWAY</scope>
</reference>
<evidence type="ECO:0000255" key="1"/>
<evidence type="ECO:0000255" key="2">
    <source>
        <dbReference type="PROSITE-ProRule" id="PRU00258"/>
    </source>
</evidence>
<evidence type="ECO:0000255" key="3">
    <source>
        <dbReference type="PROSITE-ProRule" id="PRU01348"/>
    </source>
</evidence>
<evidence type="ECO:0000255" key="4">
    <source>
        <dbReference type="PROSITE-ProRule" id="PRU01363"/>
    </source>
</evidence>
<evidence type="ECO:0000269" key="5">
    <source>
    </source>
</evidence>
<evidence type="ECO:0000269" key="6">
    <source>
    </source>
</evidence>
<evidence type="ECO:0000269" key="7">
    <source>
    </source>
</evidence>
<evidence type="ECO:0000303" key="8">
    <source>
    </source>
</evidence>
<evidence type="ECO:0000303" key="9">
    <source>
    </source>
</evidence>
<evidence type="ECO:0000305" key="10">
    <source>
    </source>
</evidence>
<evidence type="ECO:0000305" key="11">
    <source>
    </source>
</evidence>